<proteinExistence type="inferred from homology"/>
<evidence type="ECO:0000255" key="1">
    <source>
        <dbReference type="HAMAP-Rule" id="MF_00173"/>
    </source>
</evidence>
<name>ARGR_THET8</name>
<feature type="chain" id="PRO_1000023611" description="Arginine repressor">
    <location>
        <begin position="1"/>
        <end position="164"/>
    </location>
</feature>
<reference key="1">
    <citation type="submission" date="2004-11" db="EMBL/GenBank/DDBJ databases">
        <title>Complete genome sequence of Thermus thermophilus HB8.</title>
        <authorList>
            <person name="Masui R."/>
            <person name="Kurokawa K."/>
            <person name="Nakagawa N."/>
            <person name="Tokunaga F."/>
            <person name="Koyama Y."/>
            <person name="Shibata T."/>
            <person name="Oshima T."/>
            <person name="Yokoyama S."/>
            <person name="Yasunaga T."/>
            <person name="Kuramitsu S."/>
        </authorList>
    </citation>
    <scope>NUCLEOTIDE SEQUENCE [LARGE SCALE GENOMIC DNA]</scope>
    <source>
        <strain>ATCC 27634 / DSM 579 / HB8</strain>
    </source>
</reference>
<gene>
    <name evidence="1" type="primary">argR</name>
    <name type="ordered locus">TTHA1559</name>
</gene>
<accession>Q5SI21</accession>
<keyword id="KW-0028">Amino-acid biosynthesis</keyword>
<keyword id="KW-0055">Arginine biosynthesis</keyword>
<keyword id="KW-0963">Cytoplasm</keyword>
<keyword id="KW-0238">DNA-binding</keyword>
<keyword id="KW-1185">Reference proteome</keyword>
<keyword id="KW-0678">Repressor</keyword>
<keyword id="KW-0804">Transcription</keyword>
<keyword id="KW-0805">Transcription regulation</keyword>
<sequence>MGNKAERHRAIQEIVRREEIGTQKELVERLRQLGFEVTQATVSRDIAELGLARIALGKGRHRYVLPAADLPENAYEELKRQFGLFVRDVDRGGNLLVVKTAEGHASGIAYLLDRLRRDEIVGTLAGDDTILVVARTEEAAQALEDEFAGLLVEGRALRRALSGS</sequence>
<dbReference type="EMBL" id="AP008226">
    <property type="protein sequence ID" value="BAD71382.1"/>
    <property type="molecule type" value="Genomic_DNA"/>
</dbReference>
<dbReference type="RefSeq" id="WP_008633181.1">
    <property type="nucleotide sequence ID" value="NC_006461.1"/>
</dbReference>
<dbReference type="RefSeq" id="YP_144825.1">
    <property type="nucleotide sequence ID" value="NC_006461.1"/>
</dbReference>
<dbReference type="SMR" id="Q5SI21"/>
<dbReference type="EnsemblBacteria" id="BAD71382">
    <property type="protein sequence ID" value="BAD71382"/>
    <property type="gene ID" value="BAD71382"/>
</dbReference>
<dbReference type="GeneID" id="3169312"/>
<dbReference type="KEGG" id="ttj:TTHA1559"/>
<dbReference type="PATRIC" id="fig|300852.9.peg.1530"/>
<dbReference type="eggNOG" id="COG1438">
    <property type="taxonomic scope" value="Bacteria"/>
</dbReference>
<dbReference type="HOGENOM" id="CLU_097103_3_0_0"/>
<dbReference type="PhylomeDB" id="Q5SI21"/>
<dbReference type="UniPathway" id="UPA00068"/>
<dbReference type="Proteomes" id="UP000000532">
    <property type="component" value="Chromosome"/>
</dbReference>
<dbReference type="GO" id="GO:0005737">
    <property type="term" value="C:cytoplasm"/>
    <property type="evidence" value="ECO:0007669"/>
    <property type="project" value="UniProtKB-SubCell"/>
</dbReference>
<dbReference type="GO" id="GO:0034618">
    <property type="term" value="F:arginine binding"/>
    <property type="evidence" value="ECO:0007669"/>
    <property type="project" value="InterPro"/>
</dbReference>
<dbReference type="GO" id="GO:0003677">
    <property type="term" value="F:DNA binding"/>
    <property type="evidence" value="ECO:0007669"/>
    <property type="project" value="UniProtKB-KW"/>
</dbReference>
<dbReference type="GO" id="GO:0003700">
    <property type="term" value="F:DNA-binding transcription factor activity"/>
    <property type="evidence" value="ECO:0007669"/>
    <property type="project" value="UniProtKB-UniRule"/>
</dbReference>
<dbReference type="GO" id="GO:0006526">
    <property type="term" value="P:L-arginine biosynthetic process"/>
    <property type="evidence" value="ECO:0007669"/>
    <property type="project" value="UniProtKB-UniPathway"/>
</dbReference>
<dbReference type="GO" id="GO:0051259">
    <property type="term" value="P:protein complex oligomerization"/>
    <property type="evidence" value="ECO:0007669"/>
    <property type="project" value="InterPro"/>
</dbReference>
<dbReference type="GO" id="GO:1900079">
    <property type="term" value="P:regulation of arginine biosynthetic process"/>
    <property type="evidence" value="ECO:0007669"/>
    <property type="project" value="UniProtKB-UniRule"/>
</dbReference>
<dbReference type="Gene3D" id="3.30.1360.40">
    <property type="match status" value="1"/>
</dbReference>
<dbReference type="Gene3D" id="1.10.10.10">
    <property type="entry name" value="Winged helix-like DNA-binding domain superfamily/Winged helix DNA-binding domain"/>
    <property type="match status" value="1"/>
</dbReference>
<dbReference type="HAMAP" id="MF_00173">
    <property type="entry name" value="Arg_repressor"/>
    <property type="match status" value="1"/>
</dbReference>
<dbReference type="InterPro" id="IPR001669">
    <property type="entry name" value="Arg_repress"/>
</dbReference>
<dbReference type="InterPro" id="IPR020899">
    <property type="entry name" value="Arg_repress_C"/>
</dbReference>
<dbReference type="InterPro" id="IPR036251">
    <property type="entry name" value="Arg_repress_C_sf"/>
</dbReference>
<dbReference type="InterPro" id="IPR020900">
    <property type="entry name" value="Arg_repress_DNA-bd"/>
</dbReference>
<dbReference type="InterPro" id="IPR036388">
    <property type="entry name" value="WH-like_DNA-bd_sf"/>
</dbReference>
<dbReference type="InterPro" id="IPR036390">
    <property type="entry name" value="WH_DNA-bd_sf"/>
</dbReference>
<dbReference type="NCBIfam" id="TIGR01529">
    <property type="entry name" value="argR_whole"/>
    <property type="match status" value="1"/>
</dbReference>
<dbReference type="PANTHER" id="PTHR34471">
    <property type="entry name" value="ARGININE REPRESSOR"/>
    <property type="match status" value="1"/>
</dbReference>
<dbReference type="PANTHER" id="PTHR34471:SF1">
    <property type="entry name" value="ARGININE REPRESSOR"/>
    <property type="match status" value="1"/>
</dbReference>
<dbReference type="Pfam" id="PF01316">
    <property type="entry name" value="Arg_repressor"/>
    <property type="match status" value="1"/>
</dbReference>
<dbReference type="Pfam" id="PF02863">
    <property type="entry name" value="Arg_repressor_C"/>
    <property type="match status" value="1"/>
</dbReference>
<dbReference type="PRINTS" id="PR01467">
    <property type="entry name" value="ARGREPRESSOR"/>
</dbReference>
<dbReference type="SUPFAM" id="SSF55252">
    <property type="entry name" value="C-terminal domain of arginine repressor"/>
    <property type="match status" value="1"/>
</dbReference>
<dbReference type="SUPFAM" id="SSF46785">
    <property type="entry name" value="Winged helix' DNA-binding domain"/>
    <property type="match status" value="1"/>
</dbReference>
<protein>
    <recommendedName>
        <fullName evidence="1">Arginine repressor</fullName>
    </recommendedName>
</protein>
<organism>
    <name type="scientific">Thermus thermophilus (strain ATCC 27634 / DSM 579 / HB8)</name>
    <dbReference type="NCBI Taxonomy" id="300852"/>
    <lineage>
        <taxon>Bacteria</taxon>
        <taxon>Thermotogati</taxon>
        <taxon>Deinococcota</taxon>
        <taxon>Deinococci</taxon>
        <taxon>Thermales</taxon>
        <taxon>Thermaceae</taxon>
        <taxon>Thermus</taxon>
    </lineage>
</organism>
<comment type="function">
    <text evidence="1">Regulates arginine biosynthesis genes.</text>
</comment>
<comment type="pathway">
    <text>Amino-acid biosynthesis; L-arginine biosynthesis [regulation].</text>
</comment>
<comment type="subcellular location">
    <subcellularLocation>
        <location evidence="1">Cytoplasm</location>
    </subcellularLocation>
</comment>
<comment type="similarity">
    <text evidence="1">Belongs to the ArgR family.</text>
</comment>